<gene>
    <name evidence="1" type="primary">plsB</name>
    <name type="ordered locus">VV0122</name>
</gene>
<sequence>MSSGQSFSHSLLKLPLSALVKGTAIPSNPIDDHHIDINKPIVYALPFRSAVDLLTLQKHALELGLPDPLSPLEIHGKSLKRYVFIASRPTLVQSDNDVPSDSIALFSDLLALHAEDSELDVQVIPATVLWGRKPGKEGNNKPYLQAMNGLQKAKAVITAGRDCLVRFSPVVSLRYMAQSHGTDSSIAHKLARVARIHFSRQKLAASGPDLPSRQVLFARLMKSPAIEQAIEEEAKSKNISMEKARKEAQDIMDEIAADFSYSLVKQGDRLLGWLWNKLYQGLNINNAATVRRLAQDGHEIVYVPCHRSHMDYLLLSYVLYHEGMVPPHIAAGINLNFFPAGPIFRRGGAFFIRRSFKGNRLYSTIFREYLAELFAKGYSVEYFSEGGRSRTGRLLPAKTGMLAMTIQAMLRGLNRPVTLVPVYIGYEHVMEVATYAKELRGKRKEKENAGLVLRTLRKLRNFGLGYVNFGEPIPLNQYLNEHAPEWTKDIDPMGASRPQWINPVVNQLANKMMTHINDAAAANALTLCATALLASRQRALSKDSLIHQIECYLQLLKNVPYSKTYTVPSESAEALVEHAISLDKFVIETDTMGDIISLDRNQSILMTYYRNNIIHLFALPSLIAQMIIRQENLTVSQIQQQVAEIYPFLKAELFLSHKEEELDELVVKVLNELVSQDLISLKADKVAKNQANTLTLVLLGRTISETLQRYSIAFNLLVSNPELAKADLEQKSQDIAQRLTRLHGINAPEYFDKGVFASLFSTLKQQGYLDSDGNCDSEKTAQFATLLYALLYPEVKLTIEESVFQLKSA</sequence>
<proteinExistence type="inferred from homology"/>
<accession>Q7MQ86</accession>
<protein>
    <recommendedName>
        <fullName evidence="1">Glycerol-3-phosphate acyltransferase</fullName>
        <shortName evidence="1">GPAT</shortName>
        <ecNumber evidence="1">2.3.1.15</ecNumber>
    </recommendedName>
</protein>
<feature type="chain" id="PRO_0000195238" description="Glycerol-3-phosphate acyltransferase">
    <location>
        <begin position="1"/>
        <end position="809"/>
    </location>
</feature>
<feature type="short sequence motif" description="HXXXXD motif">
    <location>
        <begin position="306"/>
        <end position="311"/>
    </location>
</feature>
<organism>
    <name type="scientific">Vibrio vulnificus (strain YJ016)</name>
    <dbReference type="NCBI Taxonomy" id="196600"/>
    <lineage>
        <taxon>Bacteria</taxon>
        <taxon>Pseudomonadati</taxon>
        <taxon>Pseudomonadota</taxon>
        <taxon>Gammaproteobacteria</taxon>
        <taxon>Vibrionales</taxon>
        <taxon>Vibrionaceae</taxon>
        <taxon>Vibrio</taxon>
    </lineage>
</organism>
<comment type="catalytic activity">
    <reaction evidence="1">
        <text>sn-glycerol 3-phosphate + an acyl-CoA = a 1-acyl-sn-glycero-3-phosphate + CoA</text>
        <dbReference type="Rhea" id="RHEA:15325"/>
        <dbReference type="ChEBI" id="CHEBI:57287"/>
        <dbReference type="ChEBI" id="CHEBI:57597"/>
        <dbReference type="ChEBI" id="CHEBI:57970"/>
        <dbReference type="ChEBI" id="CHEBI:58342"/>
        <dbReference type="EC" id="2.3.1.15"/>
    </reaction>
</comment>
<comment type="pathway">
    <text evidence="1">Phospholipid metabolism; CDP-diacylglycerol biosynthesis; CDP-diacylglycerol from sn-glycerol 3-phosphate: step 1/3.</text>
</comment>
<comment type="subcellular location">
    <subcellularLocation>
        <location evidence="1">Cell inner membrane</location>
        <topology evidence="1">Peripheral membrane protein</topology>
        <orientation evidence="1">Cytoplasmic side</orientation>
    </subcellularLocation>
</comment>
<comment type="domain">
    <text evidence="1">The HXXXXD motif is essential for acyltransferase activity and may constitute the binding site for the phosphate moiety of the glycerol-3-phosphate.</text>
</comment>
<comment type="similarity">
    <text evidence="1">Belongs to the GPAT/DAPAT family.</text>
</comment>
<name>PLSB_VIBVY</name>
<reference key="1">
    <citation type="journal article" date="2003" name="Genome Res.">
        <title>Comparative genome analysis of Vibrio vulnificus, a marine pathogen.</title>
        <authorList>
            <person name="Chen C.-Y."/>
            <person name="Wu K.-M."/>
            <person name="Chang Y.-C."/>
            <person name="Chang C.-H."/>
            <person name="Tsai H.-C."/>
            <person name="Liao T.-L."/>
            <person name="Liu Y.-M."/>
            <person name="Chen H.-J."/>
            <person name="Shen A.B.-T."/>
            <person name="Li J.-C."/>
            <person name="Su T.-L."/>
            <person name="Shao C.-P."/>
            <person name="Lee C.-T."/>
            <person name="Hor L.-I."/>
            <person name="Tsai S.-F."/>
        </authorList>
    </citation>
    <scope>NUCLEOTIDE SEQUENCE [LARGE SCALE GENOMIC DNA]</scope>
    <source>
        <strain>YJ016</strain>
    </source>
</reference>
<keyword id="KW-0012">Acyltransferase</keyword>
<keyword id="KW-0997">Cell inner membrane</keyword>
<keyword id="KW-1003">Cell membrane</keyword>
<keyword id="KW-0444">Lipid biosynthesis</keyword>
<keyword id="KW-0443">Lipid metabolism</keyword>
<keyword id="KW-0472">Membrane</keyword>
<keyword id="KW-0594">Phospholipid biosynthesis</keyword>
<keyword id="KW-1208">Phospholipid metabolism</keyword>
<keyword id="KW-0808">Transferase</keyword>
<evidence type="ECO:0000255" key="1">
    <source>
        <dbReference type="HAMAP-Rule" id="MF_00393"/>
    </source>
</evidence>
<dbReference type="EC" id="2.3.1.15" evidence="1"/>
<dbReference type="EMBL" id="BA000037">
    <property type="protein sequence ID" value="BAC92886.1"/>
    <property type="molecule type" value="Genomic_DNA"/>
</dbReference>
<dbReference type="RefSeq" id="WP_011149131.1">
    <property type="nucleotide sequence ID" value="NC_005139.1"/>
</dbReference>
<dbReference type="SMR" id="Q7MQ86"/>
<dbReference type="STRING" id="672.VV93_v1c01100"/>
<dbReference type="KEGG" id="vvy:VV0122"/>
<dbReference type="PATRIC" id="fig|196600.6.peg.170"/>
<dbReference type="eggNOG" id="COG2937">
    <property type="taxonomic scope" value="Bacteria"/>
</dbReference>
<dbReference type="HOGENOM" id="CLU_015407_0_0_6"/>
<dbReference type="UniPathway" id="UPA00557">
    <property type="reaction ID" value="UER00612"/>
</dbReference>
<dbReference type="Proteomes" id="UP000002675">
    <property type="component" value="Chromosome I"/>
</dbReference>
<dbReference type="GO" id="GO:0005886">
    <property type="term" value="C:plasma membrane"/>
    <property type="evidence" value="ECO:0007669"/>
    <property type="project" value="UniProtKB-SubCell"/>
</dbReference>
<dbReference type="GO" id="GO:0004366">
    <property type="term" value="F:glycerol-3-phosphate O-acyltransferase activity"/>
    <property type="evidence" value="ECO:0007669"/>
    <property type="project" value="UniProtKB-UniRule"/>
</dbReference>
<dbReference type="GO" id="GO:0016024">
    <property type="term" value="P:CDP-diacylglycerol biosynthetic process"/>
    <property type="evidence" value="ECO:0007669"/>
    <property type="project" value="UniProtKB-UniRule"/>
</dbReference>
<dbReference type="GO" id="GO:0006631">
    <property type="term" value="P:fatty acid metabolic process"/>
    <property type="evidence" value="ECO:0007669"/>
    <property type="project" value="TreeGrafter"/>
</dbReference>
<dbReference type="CDD" id="cd07993">
    <property type="entry name" value="LPLAT_DHAPAT-like"/>
    <property type="match status" value="1"/>
</dbReference>
<dbReference type="HAMAP" id="MF_00393">
    <property type="entry name" value="Glyc3P_acyltrans"/>
    <property type="match status" value="1"/>
</dbReference>
<dbReference type="InterPro" id="IPR022284">
    <property type="entry name" value="GPAT/DHAPAT"/>
</dbReference>
<dbReference type="InterPro" id="IPR045520">
    <property type="entry name" value="GPAT/DHAPAT_C"/>
</dbReference>
<dbReference type="InterPro" id="IPR041728">
    <property type="entry name" value="GPAT/DHAPAT_LPLAT"/>
</dbReference>
<dbReference type="InterPro" id="IPR028354">
    <property type="entry name" value="GPAT_PlsB"/>
</dbReference>
<dbReference type="InterPro" id="IPR002123">
    <property type="entry name" value="Plipid/glycerol_acylTrfase"/>
</dbReference>
<dbReference type="NCBIfam" id="TIGR03703">
    <property type="entry name" value="plsB"/>
    <property type="match status" value="1"/>
</dbReference>
<dbReference type="NCBIfam" id="NF003441">
    <property type="entry name" value="PRK04974.1"/>
    <property type="match status" value="1"/>
</dbReference>
<dbReference type="PANTHER" id="PTHR12563:SF17">
    <property type="entry name" value="DIHYDROXYACETONE PHOSPHATE ACYLTRANSFERASE"/>
    <property type="match status" value="1"/>
</dbReference>
<dbReference type="PANTHER" id="PTHR12563">
    <property type="entry name" value="GLYCEROL-3-PHOSPHATE ACYLTRANSFERASE"/>
    <property type="match status" value="1"/>
</dbReference>
<dbReference type="Pfam" id="PF01553">
    <property type="entry name" value="Acyltransferase"/>
    <property type="match status" value="1"/>
</dbReference>
<dbReference type="Pfam" id="PF19277">
    <property type="entry name" value="GPAT_C"/>
    <property type="match status" value="1"/>
</dbReference>
<dbReference type="PIRSF" id="PIRSF500064">
    <property type="entry name" value="GPAT"/>
    <property type="match status" value="1"/>
</dbReference>
<dbReference type="PIRSF" id="PIRSF000437">
    <property type="entry name" value="GPAT_DHAPAT"/>
    <property type="match status" value="1"/>
</dbReference>
<dbReference type="SMART" id="SM00563">
    <property type="entry name" value="PlsC"/>
    <property type="match status" value="1"/>
</dbReference>
<dbReference type="SUPFAM" id="SSF69593">
    <property type="entry name" value="Glycerol-3-phosphate (1)-acyltransferase"/>
    <property type="match status" value="1"/>
</dbReference>